<reference key="1">
    <citation type="journal article" date="1998" name="Nature">
        <title>Deciphering the biology of Mycobacterium tuberculosis from the complete genome sequence.</title>
        <authorList>
            <person name="Cole S.T."/>
            <person name="Brosch R."/>
            <person name="Parkhill J."/>
            <person name="Garnier T."/>
            <person name="Churcher C.M."/>
            <person name="Harris D.E."/>
            <person name="Gordon S.V."/>
            <person name="Eiglmeier K."/>
            <person name="Gas S."/>
            <person name="Barry C.E. III"/>
            <person name="Tekaia F."/>
            <person name="Badcock K."/>
            <person name="Basham D."/>
            <person name="Brown D."/>
            <person name="Chillingworth T."/>
            <person name="Connor R."/>
            <person name="Davies R.M."/>
            <person name="Devlin K."/>
            <person name="Feltwell T."/>
            <person name="Gentles S."/>
            <person name="Hamlin N."/>
            <person name="Holroyd S."/>
            <person name="Hornsby T."/>
            <person name="Jagels K."/>
            <person name="Krogh A."/>
            <person name="McLean J."/>
            <person name="Moule S."/>
            <person name="Murphy L.D."/>
            <person name="Oliver S."/>
            <person name="Osborne J."/>
            <person name="Quail M.A."/>
            <person name="Rajandream M.A."/>
            <person name="Rogers J."/>
            <person name="Rutter S."/>
            <person name="Seeger K."/>
            <person name="Skelton S."/>
            <person name="Squares S."/>
            <person name="Squares R."/>
            <person name="Sulston J.E."/>
            <person name="Taylor K."/>
            <person name="Whitehead S."/>
            <person name="Barrell B.G."/>
        </authorList>
    </citation>
    <scope>NUCLEOTIDE SEQUENCE [LARGE SCALE GENOMIC DNA]</scope>
    <source>
        <strain>ATCC 25618 / H37Rv</strain>
    </source>
</reference>
<reference key="2">
    <citation type="journal article" date="2002" name="Microbiology">
        <title>Re-annotation of the genome sequence of Mycobacterium tuberculosis H37Rv.</title>
        <authorList>
            <person name="Camus J.-C."/>
            <person name="Pryor M.J."/>
            <person name="Medigue C."/>
            <person name="Cole S.T."/>
        </authorList>
    </citation>
    <scope>SEQUENCE REVISION</scope>
    <source>
        <strain>ATCC 25618 / H37Rv</strain>
    </source>
</reference>
<reference key="3">
    <citation type="journal article" date="2000" name="J. Biol. Chem.">
        <title>Phosphatidylinositol is an essential phospholipid of mycobacteria.</title>
        <authorList>
            <person name="Jackson M."/>
            <person name="Crick D.C."/>
            <person name="Brennan P.J."/>
        </authorList>
    </citation>
    <scope>FUNCTION</scope>
    <scope>PATHWAY</scope>
    <source>
        <strain>H37Rv</strain>
    </source>
</reference>
<feature type="chain" id="PRO_0000393110" description="Probable phosphatidylglycerophosphate synthase">
    <location>
        <begin position="1"/>
        <end position="209"/>
    </location>
</feature>
<feature type="transmembrane region" description="Helical" evidence="1">
    <location>
        <begin position="32"/>
        <end position="52"/>
    </location>
</feature>
<feature type="transmembrane region" description="Helical" evidence="1">
    <location>
        <begin position="105"/>
        <end position="125"/>
    </location>
</feature>
<feature type="transmembrane region" description="Helical" evidence="1">
    <location>
        <begin position="147"/>
        <end position="167"/>
    </location>
</feature>
<feature type="transmembrane region" description="Helical" evidence="1">
    <location>
        <begin position="171"/>
        <end position="191"/>
    </location>
</feature>
<name>PGSA_MYCTU</name>
<accession>P9WPG3</accession>
<accession>L0TAI5</accession>
<accession>O33288</accession>
<accession>Q7D6N5</accession>
<evidence type="ECO:0000255" key="1"/>
<evidence type="ECO:0000303" key="2">
    <source>
    </source>
</evidence>
<evidence type="ECO:0000305" key="3"/>
<evidence type="ECO:0000305" key="4">
    <source>
    </source>
</evidence>
<evidence type="ECO:0000312" key="5">
    <source>
        <dbReference type="EMBL" id="CCP45545.1"/>
    </source>
</evidence>
<sequence length="209" mass="22136">MSRSTRYSVAVSAQPETGQIAGRARIANLANILTLLRLVMVPVFLLALFYGGGHHSAARVVAWAIFATACITDRFDGLLARNYGMATEFGAFVDPIADKTLIGSALIGLSMLGDLPWWVTVLILTRELGVTVLRLAVIRRGVIPASWGGKLKTFVQAVAIGLFVLPLSGPLHVAAVVVMAAAILLTVITGVDYVARALRDIGGIRQTAS</sequence>
<gene>
    <name evidence="2 5" type="primary">pgsA3</name>
    <name type="ordered locus">Rv2746c</name>
</gene>
<comment type="function">
    <text evidence="4">Probably catalyzes the synthesis of phosphatidylglycerophosphate by transferring a phosphatidyl group from CDP-diacylglycerol to glycerol 3-phosphate.</text>
</comment>
<comment type="catalytic activity">
    <reaction evidence="4">
        <text>a CDP-1,2-diacyl-sn-glycerol + sn-glycerol 3-phosphate = a 1,2-diacyl-sn-glycero-3-phospho-(1'-sn-glycero-3'-phosphate) + CMP + H(+)</text>
        <dbReference type="Rhea" id="RHEA:12593"/>
        <dbReference type="ChEBI" id="CHEBI:15378"/>
        <dbReference type="ChEBI" id="CHEBI:57597"/>
        <dbReference type="ChEBI" id="CHEBI:58332"/>
        <dbReference type="ChEBI" id="CHEBI:60110"/>
        <dbReference type="ChEBI" id="CHEBI:60377"/>
        <dbReference type="EC" id="2.7.8.5"/>
    </reaction>
</comment>
<comment type="pathway">
    <text evidence="4">Lipid metabolism; phospholipid metabolism.</text>
</comment>
<comment type="subcellular location">
    <subcellularLocation>
        <location evidence="3">Cell membrane</location>
        <topology evidence="3">Multi-pass membrane protein</topology>
    </subcellularLocation>
</comment>
<comment type="similarity">
    <text evidence="3">Belongs to the CDP-alcohol phosphatidyltransferase class-I family.</text>
</comment>
<protein>
    <recommendedName>
        <fullName evidence="2">Probable phosphatidylglycerophosphate synthase</fullName>
        <shortName evidence="2">PGP synthase</shortName>
        <shortName evidence="2">PGPS</shortName>
        <ecNumber evidence="4">2.7.8.5</ecNumber>
    </recommendedName>
    <alternativeName>
        <fullName>CDP-diacylglycerol--glycerol-3-phosphate phosphatidyltransferase</fullName>
    </alternativeName>
</protein>
<proteinExistence type="inferred from homology"/>
<keyword id="KW-1003">Cell membrane</keyword>
<keyword id="KW-0444">Lipid biosynthesis</keyword>
<keyword id="KW-0443">Lipid metabolism</keyword>
<keyword id="KW-0472">Membrane</keyword>
<keyword id="KW-0594">Phospholipid biosynthesis</keyword>
<keyword id="KW-1208">Phospholipid metabolism</keyword>
<keyword id="KW-1185">Reference proteome</keyword>
<keyword id="KW-0808">Transferase</keyword>
<keyword id="KW-0812">Transmembrane</keyword>
<keyword id="KW-1133">Transmembrane helix</keyword>
<organism>
    <name type="scientific">Mycobacterium tuberculosis (strain ATCC 25618 / H37Rv)</name>
    <dbReference type="NCBI Taxonomy" id="83332"/>
    <lineage>
        <taxon>Bacteria</taxon>
        <taxon>Bacillati</taxon>
        <taxon>Actinomycetota</taxon>
        <taxon>Actinomycetes</taxon>
        <taxon>Mycobacteriales</taxon>
        <taxon>Mycobacteriaceae</taxon>
        <taxon>Mycobacterium</taxon>
        <taxon>Mycobacterium tuberculosis complex</taxon>
    </lineage>
</organism>
<dbReference type="EC" id="2.7.8.5" evidence="4"/>
<dbReference type="EMBL" id="AL123456">
    <property type="protein sequence ID" value="CCP45545.1"/>
    <property type="molecule type" value="Genomic_DNA"/>
</dbReference>
<dbReference type="PIR" id="A70879">
    <property type="entry name" value="A70879"/>
</dbReference>
<dbReference type="RefSeq" id="NP_217262.1">
    <property type="nucleotide sequence ID" value="NC_000962.3"/>
</dbReference>
<dbReference type="RefSeq" id="WP_003414035.1">
    <property type="nucleotide sequence ID" value="NC_000962.3"/>
</dbReference>
<dbReference type="SMR" id="P9WPG3"/>
<dbReference type="FunCoup" id="P9WPG3">
    <property type="interactions" value="168"/>
</dbReference>
<dbReference type="STRING" id="83332.Rv2746c"/>
<dbReference type="PaxDb" id="83332-Rv2746c"/>
<dbReference type="DNASU" id="888375"/>
<dbReference type="GeneID" id="888375"/>
<dbReference type="KEGG" id="mtu:Rv2746c"/>
<dbReference type="KEGG" id="mtv:RVBD_2746c"/>
<dbReference type="PATRIC" id="fig|83332.111.peg.3057"/>
<dbReference type="TubercuList" id="Rv2746c"/>
<dbReference type="eggNOG" id="COG0558">
    <property type="taxonomic scope" value="Bacteria"/>
</dbReference>
<dbReference type="InParanoid" id="P9WPG3"/>
<dbReference type="OrthoDB" id="9796672at2"/>
<dbReference type="PhylomeDB" id="P9WPG3"/>
<dbReference type="UniPathway" id="UPA00085"/>
<dbReference type="Proteomes" id="UP000001584">
    <property type="component" value="Chromosome"/>
</dbReference>
<dbReference type="GO" id="GO:0009274">
    <property type="term" value="C:peptidoglycan-based cell wall"/>
    <property type="evidence" value="ECO:0000314"/>
    <property type="project" value="UniProtKB"/>
</dbReference>
<dbReference type="GO" id="GO:0005886">
    <property type="term" value="C:plasma membrane"/>
    <property type="evidence" value="ECO:0007669"/>
    <property type="project" value="UniProtKB-SubCell"/>
</dbReference>
<dbReference type="GO" id="GO:0008444">
    <property type="term" value="F:CDP-diacylglycerol-glycerol-3-phosphate 3-phosphatidyltransferase activity"/>
    <property type="evidence" value="ECO:0000314"/>
    <property type="project" value="UniProtKB"/>
</dbReference>
<dbReference type="GO" id="GO:0046474">
    <property type="term" value="P:glycerophospholipid biosynthetic process"/>
    <property type="evidence" value="ECO:0000315"/>
    <property type="project" value="MTBBASE"/>
</dbReference>
<dbReference type="GO" id="GO:0008654">
    <property type="term" value="P:phospholipid biosynthetic process"/>
    <property type="evidence" value="ECO:0000314"/>
    <property type="project" value="UniProtKB"/>
</dbReference>
<dbReference type="FunFam" id="1.20.120.1760:FF:000007">
    <property type="entry name" value="CDP-diacylglycerol--glycerol-3-phosphate 3-phosphatidyltransferase"/>
    <property type="match status" value="1"/>
</dbReference>
<dbReference type="Gene3D" id="1.20.120.1760">
    <property type="match status" value="1"/>
</dbReference>
<dbReference type="InterPro" id="IPR050324">
    <property type="entry name" value="CDP-alcohol_PTase-I"/>
</dbReference>
<dbReference type="InterPro" id="IPR000462">
    <property type="entry name" value="CDP-OH_P_trans"/>
</dbReference>
<dbReference type="InterPro" id="IPR043130">
    <property type="entry name" value="CDP-OH_PTrfase_TM_dom"/>
</dbReference>
<dbReference type="InterPro" id="IPR048254">
    <property type="entry name" value="CDP_ALCOHOL_P_TRANSF_CS"/>
</dbReference>
<dbReference type="InterPro" id="IPR004570">
    <property type="entry name" value="Phosphatidylglycerol_P_synth"/>
</dbReference>
<dbReference type="NCBIfam" id="TIGR00560">
    <property type="entry name" value="pgsA"/>
    <property type="match status" value="1"/>
</dbReference>
<dbReference type="PANTHER" id="PTHR14269">
    <property type="entry name" value="CDP-DIACYLGLYCEROL--GLYCEROL-3-PHOSPHATE 3-PHOSPHATIDYLTRANSFERASE-RELATED"/>
    <property type="match status" value="1"/>
</dbReference>
<dbReference type="PANTHER" id="PTHR14269:SF52">
    <property type="entry name" value="PHOSPHATIDYLGLYCEROPHOSPHATE SYNTHASE-RELATED"/>
    <property type="match status" value="1"/>
</dbReference>
<dbReference type="Pfam" id="PF01066">
    <property type="entry name" value="CDP-OH_P_transf"/>
    <property type="match status" value="1"/>
</dbReference>
<dbReference type="PIRSF" id="PIRSF000847">
    <property type="entry name" value="Phos_ph_gly_syn"/>
    <property type="match status" value="1"/>
</dbReference>
<dbReference type="PROSITE" id="PS00379">
    <property type="entry name" value="CDP_ALCOHOL_P_TRANSF"/>
    <property type="match status" value="1"/>
</dbReference>